<dbReference type="EMBL" id="AB180446">
    <property type="protein sequence ID" value="BAD26690.1"/>
    <property type="molecule type" value="mRNA"/>
</dbReference>
<dbReference type="RefSeq" id="NP_001296064.1">
    <property type="nucleotide sequence ID" value="NM_001309135.1"/>
</dbReference>
<dbReference type="SMR" id="Q6F444"/>
<dbReference type="GeneID" id="105382338"/>
<dbReference type="KEGG" id="pxy:105382338"/>
<dbReference type="CTD" id="6152"/>
<dbReference type="OrthoDB" id="1727108at2759"/>
<dbReference type="GO" id="GO:0022625">
    <property type="term" value="C:cytosolic large ribosomal subunit"/>
    <property type="evidence" value="ECO:0007669"/>
    <property type="project" value="TreeGrafter"/>
</dbReference>
<dbReference type="GO" id="GO:0003729">
    <property type="term" value="F:mRNA binding"/>
    <property type="evidence" value="ECO:0007669"/>
    <property type="project" value="TreeGrafter"/>
</dbReference>
<dbReference type="GO" id="GO:0003735">
    <property type="term" value="F:structural constituent of ribosome"/>
    <property type="evidence" value="ECO:0007669"/>
    <property type="project" value="InterPro"/>
</dbReference>
<dbReference type="GO" id="GO:0002181">
    <property type="term" value="P:cytoplasmic translation"/>
    <property type="evidence" value="ECO:0007669"/>
    <property type="project" value="TreeGrafter"/>
</dbReference>
<dbReference type="CDD" id="cd00472">
    <property type="entry name" value="Ribosomal_L24e_L24"/>
    <property type="match status" value="1"/>
</dbReference>
<dbReference type="FunFam" id="2.30.170.20:FF:000002">
    <property type="entry name" value="60S ribosomal protein L24"/>
    <property type="match status" value="1"/>
</dbReference>
<dbReference type="Gene3D" id="6.10.250.1270">
    <property type="match status" value="1"/>
</dbReference>
<dbReference type="Gene3D" id="2.30.170.20">
    <property type="entry name" value="Ribosomal protein L24e"/>
    <property type="match status" value="1"/>
</dbReference>
<dbReference type="InterPro" id="IPR038630">
    <property type="entry name" value="L24e/L24_sf"/>
</dbReference>
<dbReference type="InterPro" id="IPR056366">
    <property type="entry name" value="Ribosomal_eL24"/>
</dbReference>
<dbReference type="InterPro" id="IPR000988">
    <property type="entry name" value="Ribosomal_eL24-rel_N"/>
</dbReference>
<dbReference type="InterPro" id="IPR011017">
    <property type="entry name" value="TRASH_dom"/>
</dbReference>
<dbReference type="PANTHER" id="PTHR10792">
    <property type="entry name" value="60S RIBOSOMAL PROTEIN L24"/>
    <property type="match status" value="1"/>
</dbReference>
<dbReference type="PANTHER" id="PTHR10792:SF1">
    <property type="entry name" value="RIBOSOMAL PROTEIN L24"/>
    <property type="match status" value="1"/>
</dbReference>
<dbReference type="Pfam" id="PF01246">
    <property type="entry name" value="Ribosomal_L24e"/>
    <property type="match status" value="1"/>
</dbReference>
<dbReference type="SMART" id="SM00746">
    <property type="entry name" value="TRASH"/>
    <property type="match status" value="1"/>
</dbReference>
<dbReference type="SUPFAM" id="SSF57716">
    <property type="entry name" value="Glucocorticoid receptor-like (DNA-binding domain)"/>
    <property type="match status" value="1"/>
</dbReference>
<proteinExistence type="evidence at transcript level"/>
<protein>
    <recommendedName>
        <fullName evidence="2">Large ribosomal subunit protein eL24</fullName>
    </recommendedName>
    <alternativeName>
        <fullName>60S ribosomal protein L24</fullName>
    </alternativeName>
</protein>
<reference key="1">
    <citation type="submission" date="2004-07" db="EMBL/GenBank/DDBJ databases">
        <title>Construction and EST analysis of full-length cDNA libraries from immunized diamond back moth, Plutella xylostella.</title>
        <authorList>
            <person name="Eum J.H."/>
            <person name="Yoe S.M."/>
            <person name="Seo Y.R."/>
            <person name="Kang S.W."/>
            <person name="Han S.S."/>
        </authorList>
    </citation>
    <scope>NUCLEOTIDE SEQUENCE [LARGE SCALE MRNA]</scope>
</reference>
<gene>
    <name type="primary">RpL24</name>
</gene>
<evidence type="ECO:0000256" key="1">
    <source>
        <dbReference type="SAM" id="MobiDB-lite"/>
    </source>
</evidence>
<evidence type="ECO:0000305" key="2"/>
<accession>Q6F444</accession>
<sequence>MKIGLCAYSGYKIYPGHGKTMVKVDGKNFTFLNSKCEAAHLMRRNPRKVTWTVLYRRKFKKGQEEEQAKKRTRRTQKYQRAIVGASLSDIMAKRNMKPEVRKAQREQAIKQAKEQKKSTKASKKTTAPPTKGKAAPKAKAAKVSQKAAPRVGGKR</sequence>
<name>RL24_PLUXY</name>
<keyword id="KW-0687">Ribonucleoprotein</keyword>
<keyword id="KW-0689">Ribosomal protein</keyword>
<organism>
    <name type="scientific">Plutella xylostella</name>
    <name type="common">Diamondback moth</name>
    <name type="synonym">Plutella maculipennis</name>
    <dbReference type="NCBI Taxonomy" id="51655"/>
    <lineage>
        <taxon>Eukaryota</taxon>
        <taxon>Metazoa</taxon>
        <taxon>Ecdysozoa</taxon>
        <taxon>Arthropoda</taxon>
        <taxon>Hexapoda</taxon>
        <taxon>Insecta</taxon>
        <taxon>Pterygota</taxon>
        <taxon>Neoptera</taxon>
        <taxon>Endopterygota</taxon>
        <taxon>Lepidoptera</taxon>
        <taxon>Glossata</taxon>
        <taxon>Ditrysia</taxon>
        <taxon>Yponomeutoidea</taxon>
        <taxon>Plutellidae</taxon>
        <taxon>Plutella</taxon>
    </lineage>
</organism>
<comment type="similarity">
    <text evidence="2">Belongs to the eukaryotic ribosomal protein eL24 family.</text>
</comment>
<feature type="chain" id="PRO_0000136879" description="Large ribosomal subunit protein eL24">
    <location>
        <begin position="1"/>
        <end position="155"/>
    </location>
</feature>
<feature type="region of interest" description="Disordered" evidence="1">
    <location>
        <begin position="92"/>
        <end position="155"/>
    </location>
</feature>
<feature type="compositionally biased region" description="Basic and acidic residues" evidence="1">
    <location>
        <begin position="96"/>
        <end position="117"/>
    </location>
</feature>
<feature type="compositionally biased region" description="Low complexity" evidence="1">
    <location>
        <begin position="124"/>
        <end position="133"/>
    </location>
</feature>